<feature type="signal peptide" evidence="2">
    <location>
        <begin position="1"/>
        <end position="32"/>
    </location>
</feature>
<feature type="chain" id="PRO_0000012864" description="Adhesion G protein-coupled receptor B2">
    <location>
        <begin position="33"/>
        <end position="1585"/>
    </location>
</feature>
<feature type="topological domain" description="Extracellular" evidence="13">
    <location>
        <begin position="33"/>
        <end position="936"/>
    </location>
</feature>
<feature type="transmembrane region" description="Helical; Name=1" evidence="2">
    <location>
        <begin position="937"/>
        <end position="957"/>
    </location>
</feature>
<feature type="topological domain" description="Cytoplasmic" evidence="13">
    <location>
        <begin position="958"/>
        <end position="965"/>
    </location>
</feature>
<feature type="transmembrane region" description="Helical; Name=2" evidence="2">
    <location>
        <begin position="966"/>
        <end position="986"/>
    </location>
</feature>
<feature type="topological domain" description="Extracellular" evidence="13">
    <location>
        <begin position="987"/>
        <end position="994"/>
    </location>
</feature>
<feature type="transmembrane region" description="Helical; Name=3" evidence="2">
    <location>
        <begin position="995"/>
        <end position="1015"/>
    </location>
</feature>
<feature type="topological domain" description="Cytoplasmic" evidence="13">
    <location>
        <begin position="1016"/>
        <end position="1036"/>
    </location>
</feature>
<feature type="transmembrane region" description="Helical; Name=4" evidence="2">
    <location>
        <begin position="1037"/>
        <end position="1057"/>
    </location>
</feature>
<feature type="topological domain" description="Extracellular" evidence="13">
    <location>
        <begin position="1058"/>
        <end position="1078"/>
    </location>
</feature>
<feature type="transmembrane region" description="Helical; Name=5" evidence="2">
    <location>
        <begin position="1079"/>
        <end position="1099"/>
    </location>
</feature>
<feature type="topological domain" description="Cytoplasmic" evidence="13">
    <location>
        <begin position="1100"/>
        <end position="1121"/>
    </location>
</feature>
<feature type="transmembrane region" description="Helical; Name=6" evidence="2">
    <location>
        <begin position="1122"/>
        <end position="1142"/>
    </location>
</feature>
<feature type="topological domain" description="Extracellular" evidence="13">
    <location>
        <begin position="1143"/>
        <end position="1153"/>
    </location>
</feature>
<feature type="transmembrane region" description="Helical; Name=7" evidence="2">
    <location>
        <begin position="1154"/>
        <end position="1174"/>
    </location>
</feature>
<feature type="topological domain" description="Cytoplasmic" evidence="13">
    <location>
        <begin position="1175"/>
        <end position="1585"/>
    </location>
</feature>
<feature type="domain" description="TSP type-1 1" evidence="4">
    <location>
        <begin position="309"/>
        <end position="362"/>
    </location>
</feature>
<feature type="domain" description="TSP type-1 2" evidence="4">
    <location>
        <begin position="364"/>
        <end position="417"/>
    </location>
</feature>
<feature type="domain" description="TSP type-1 3" evidence="4">
    <location>
        <begin position="419"/>
        <end position="472"/>
    </location>
</feature>
<feature type="domain" description="TSP type-1 4" evidence="4">
    <location>
        <begin position="475"/>
        <end position="528"/>
    </location>
</feature>
<feature type="domain" description="GAIN-B" evidence="3">
    <location>
        <begin position="757"/>
        <end position="924"/>
    </location>
</feature>
<feature type="region of interest" description="Disordered" evidence="5">
    <location>
        <begin position="229"/>
        <end position="271"/>
    </location>
</feature>
<feature type="region of interest" description="Disordered" evidence="5">
    <location>
        <begin position="767"/>
        <end position="806"/>
    </location>
</feature>
<feature type="region of interest" description="GPS" evidence="3">
    <location>
        <begin position="874"/>
        <end position="924"/>
    </location>
</feature>
<feature type="region of interest" description="Disordered" evidence="5">
    <location>
        <begin position="1359"/>
        <end position="1385"/>
    </location>
</feature>
<feature type="region of interest" description="Disordered" evidence="5">
    <location>
        <begin position="1423"/>
        <end position="1454"/>
    </location>
</feature>
<feature type="region of interest" description="Disordered" evidence="5">
    <location>
        <begin position="1498"/>
        <end position="1585"/>
    </location>
</feature>
<feature type="compositionally biased region" description="Low complexity" evidence="5">
    <location>
        <begin position="229"/>
        <end position="238"/>
    </location>
</feature>
<feature type="compositionally biased region" description="Low complexity" evidence="5">
    <location>
        <begin position="769"/>
        <end position="780"/>
    </location>
</feature>
<feature type="compositionally biased region" description="Basic and acidic residues" evidence="5">
    <location>
        <begin position="1372"/>
        <end position="1382"/>
    </location>
</feature>
<feature type="compositionally biased region" description="Polar residues" evidence="5">
    <location>
        <begin position="1543"/>
        <end position="1552"/>
    </location>
</feature>
<feature type="compositionally biased region" description="Acidic residues" evidence="5">
    <location>
        <begin position="1575"/>
        <end position="1585"/>
    </location>
</feature>
<feature type="site" description="Cleavage; by furin" evidence="6">
    <location>
        <begin position="296"/>
        <end position="297"/>
    </location>
</feature>
<feature type="site" description="Cleavage; by autolysis" evidence="3">
    <location>
        <begin position="911"/>
        <end position="912"/>
    </location>
</feature>
<feature type="modified residue" description="Phosphotyrosine" evidence="1">
    <location>
        <position position="1351"/>
    </location>
</feature>
<feature type="glycosylation site" description="N-linked (GlcNAc...) asparagine" evidence="2">
    <location>
        <position position="106"/>
    </location>
</feature>
<feature type="glycosylation site" description="N-linked (GlcNAc...) asparagine" evidence="2">
    <location>
        <position position="191"/>
    </location>
</feature>
<feature type="glycosylation site" description="N-linked (GlcNAc...) asparagine" evidence="2">
    <location>
        <position position="192"/>
    </location>
</feature>
<feature type="glycosylation site" description="O-linked (Xyl...) (chondroitin sulfate) serine" evidence="8">
    <location>
        <position position="266"/>
    </location>
</feature>
<feature type="glycosylation site" description="N-linked (GlcNAc...) asparagine" evidence="2">
    <location>
        <position position="356"/>
    </location>
</feature>
<feature type="glycosylation site" description="N-linked (GlcNAc...) asparagine" evidence="2">
    <location>
        <position position="437"/>
    </location>
</feature>
<feature type="glycosylation site" description="N-linked (GlcNAc...) asparagine" evidence="2">
    <location>
        <position position="560"/>
    </location>
</feature>
<feature type="glycosylation site" description="N-linked (GlcNAc...) asparagine" evidence="2">
    <location>
        <position position="645"/>
    </location>
</feature>
<feature type="glycosylation site" description="N-linked (GlcNAc...) asparagine" evidence="2">
    <location>
        <position position="867"/>
    </location>
</feature>
<feature type="disulfide bond" evidence="4">
    <location>
        <begin position="321"/>
        <end position="355"/>
    </location>
</feature>
<feature type="disulfide bond" evidence="4">
    <location>
        <begin position="325"/>
        <end position="361"/>
    </location>
</feature>
<feature type="disulfide bond" evidence="4">
    <location>
        <begin position="336"/>
        <end position="345"/>
    </location>
</feature>
<feature type="disulfide bond" evidence="4">
    <location>
        <begin position="376"/>
        <end position="411"/>
    </location>
</feature>
<feature type="disulfide bond" evidence="4">
    <location>
        <begin position="380"/>
        <end position="416"/>
    </location>
</feature>
<feature type="disulfide bond" evidence="4">
    <location>
        <begin position="391"/>
        <end position="401"/>
    </location>
</feature>
<feature type="disulfide bond" evidence="4">
    <location>
        <begin position="431"/>
        <end position="466"/>
    </location>
</feature>
<feature type="disulfide bond" evidence="4">
    <location>
        <begin position="435"/>
        <end position="471"/>
    </location>
</feature>
<feature type="disulfide bond" evidence="4">
    <location>
        <begin position="446"/>
        <end position="456"/>
    </location>
</feature>
<feature type="disulfide bond" evidence="4">
    <location>
        <begin position="487"/>
        <end position="522"/>
    </location>
</feature>
<feature type="disulfide bond" evidence="4">
    <location>
        <begin position="491"/>
        <end position="527"/>
    </location>
</feature>
<feature type="disulfide bond" evidence="4">
    <location>
        <begin position="502"/>
        <end position="512"/>
    </location>
</feature>
<feature type="disulfide bond" evidence="4">
    <location>
        <begin position="534"/>
        <end position="569"/>
    </location>
</feature>
<feature type="disulfide bond" evidence="4">
    <location>
        <begin position="557"/>
        <end position="587"/>
    </location>
</feature>
<feature type="disulfide bond" evidence="3">
    <location>
        <begin position="874"/>
        <end position="906"/>
    </location>
</feature>
<feature type="disulfide bond" evidence="3">
    <location>
        <begin position="894"/>
        <end position="908"/>
    </location>
</feature>
<feature type="splice variant" id="VSP_037045" description="In isoform 3." evidence="13">
    <location>
        <begin position="1"/>
        <end position="12"/>
    </location>
</feature>
<feature type="splice variant" id="VSP_037046" description="In isoform 4." evidence="10">
    <location>
        <begin position="1119"/>
        <end position="1151"/>
    </location>
</feature>
<feature type="splice variant" id="VSP_037047" description="In isoform 2 and isoform 4." evidence="10 12">
    <location>
        <position position="1473"/>
    </location>
</feature>
<feature type="sequence variant" id="VAR_079840" description="Found in a patient with progressive spastic paraparesis and other neurological symptoms; uncertain significance; enhances receptor surface expression; increases the constitutive signaling activity; does not affect interaction with GNAZ; promotes enhanced interaction with GNAI1; decreases interaction with SH3GL2; dbSNP:rs778361520." evidence="9">
    <original>R</original>
    <variation>W</variation>
    <location>
        <position position="1465"/>
    </location>
</feature>
<feature type="mutagenesis site" description="Inhibits autoproteolytic cleavage." evidence="6">
    <original>W</original>
    <variation>S</variation>
    <location>
        <position position="889"/>
    </location>
</feature>
<feature type="mutagenesis site" description="Inhibits autoproteolytic cleavage." evidence="6">
    <original>C</original>
    <variation>W</variation>
    <location>
        <position position="908"/>
    </location>
</feature>
<feature type="mutagenesis site" description="Inhibits autoproteolytic cleavage." evidence="6">
    <original>S</original>
    <variation>P</variation>
    <location>
        <position position="912"/>
    </location>
</feature>
<feature type="sequence conflict" description="In Ref. 4; AAI36534." evidence="13" ref="4">
    <original>C</original>
    <variation>R</variation>
    <location>
        <position position="325"/>
    </location>
</feature>
<feature type="strand" evidence="15">
    <location>
        <begin position="537"/>
        <end position="539"/>
    </location>
</feature>
<feature type="strand" evidence="15">
    <location>
        <begin position="542"/>
        <end position="544"/>
    </location>
</feature>
<feature type="strand" evidence="15">
    <location>
        <begin position="552"/>
        <end position="556"/>
    </location>
</feature>
<feature type="strand" evidence="15">
    <location>
        <begin position="561"/>
        <end position="571"/>
    </location>
</feature>
<feature type="strand" evidence="15">
    <location>
        <begin position="573"/>
        <end position="575"/>
    </location>
</feature>
<feature type="strand" evidence="15">
    <location>
        <begin position="577"/>
        <end position="589"/>
    </location>
</feature>
<feature type="helix" evidence="15">
    <location>
        <begin position="590"/>
        <end position="603"/>
    </location>
</feature>
<feature type="helix" evidence="15">
    <location>
        <begin position="611"/>
        <end position="627"/>
    </location>
</feature>
<feature type="helix" evidence="15">
    <location>
        <begin position="633"/>
        <end position="652"/>
    </location>
</feature>
<feature type="helix" evidence="15">
    <location>
        <begin position="659"/>
        <end position="673"/>
    </location>
</feature>
<feature type="helix" evidence="15">
    <location>
        <begin position="675"/>
        <end position="677"/>
    </location>
</feature>
<feature type="helix" evidence="15">
    <location>
        <begin position="678"/>
        <end position="684"/>
    </location>
</feature>
<feature type="turn" evidence="15">
    <location>
        <begin position="685"/>
        <end position="687"/>
    </location>
</feature>
<feature type="helix" evidence="15">
    <location>
        <begin position="690"/>
        <end position="706"/>
    </location>
</feature>
<feature type="strand" evidence="15">
    <location>
        <begin position="714"/>
        <end position="718"/>
    </location>
</feature>
<feature type="strand" evidence="15">
    <location>
        <begin position="720"/>
        <end position="730"/>
    </location>
</feature>
<feature type="strand" evidence="15">
    <location>
        <begin position="738"/>
        <end position="740"/>
    </location>
</feature>
<feature type="strand" evidence="15">
    <location>
        <begin position="743"/>
        <end position="745"/>
    </location>
</feature>
<feature type="helix" evidence="15">
    <location>
        <begin position="750"/>
        <end position="753"/>
    </location>
</feature>
<feature type="strand" evidence="15">
    <location>
        <begin position="758"/>
        <end position="761"/>
    </location>
</feature>
<feature type="helix" evidence="15">
    <location>
        <begin position="763"/>
        <end position="765"/>
    </location>
</feature>
<feature type="strand" evidence="15">
    <location>
        <begin position="813"/>
        <end position="823"/>
    </location>
</feature>
<feature type="helix" evidence="15">
    <location>
        <begin position="824"/>
        <end position="827"/>
    </location>
</feature>
<feature type="strand" evidence="15">
    <location>
        <begin position="841"/>
        <end position="848"/>
    </location>
</feature>
<feature type="strand" evidence="15">
    <location>
        <begin position="858"/>
        <end position="866"/>
    </location>
</feature>
<feature type="strand" evidence="15">
    <location>
        <begin position="870"/>
        <end position="877"/>
    </location>
</feature>
<feature type="helix" evidence="15">
    <location>
        <begin position="884"/>
        <end position="886"/>
    </location>
</feature>
<feature type="strand" evidence="15">
    <location>
        <begin position="890"/>
        <end position="900"/>
    </location>
</feature>
<feature type="strand" evidence="15">
    <location>
        <begin position="903"/>
        <end position="910"/>
    </location>
</feature>
<feature type="strand" evidence="15">
    <location>
        <begin position="912"/>
        <end position="919"/>
    </location>
</feature>
<dbReference type="EMBL" id="AB005298">
    <property type="protein sequence ID" value="BAA25362.1"/>
    <property type="status" value="ALT_INIT"/>
    <property type="molecule type" value="mRNA"/>
</dbReference>
<dbReference type="EMBL" id="AB065648">
    <property type="protein sequence ID" value="BAC05874.1"/>
    <property type="molecule type" value="Genomic_DNA"/>
</dbReference>
<dbReference type="EMBL" id="AC114488">
    <property type="status" value="NOT_ANNOTATED_CDS"/>
    <property type="molecule type" value="Genomic_DNA"/>
</dbReference>
<dbReference type="EMBL" id="AL354919">
    <property type="status" value="NOT_ANNOTATED_CDS"/>
    <property type="molecule type" value="Genomic_DNA"/>
</dbReference>
<dbReference type="EMBL" id="BC009035">
    <property type="protein sequence ID" value="AAH09035.1"/>
    <property type="molecule type" value="mRNA"/>
</dbReference>
<dbReference type="EMBL" id="BC136533">
    <property type="protein sequence ID" value="AAI36534.1"/>
    <property type="molecule type" value="mRNA"/>
</dbReference>
<dbReference type="CCDS" id="CCDS346.2">
    <molecule id="O60241-1"/>
</dbReference>
<dbReference type="CCDS" id="CCDS72746.1">
    <molecule id="O60241-4"/>
</dbReference>
<dbReference type="CCDS" id="CCDS72747.1">
    <molecule id="O60241-2"/>
</dbReference>
<dbReference type="PIR" id="T00027">
    <property type="entry name" value="T00027"/>
</dbReference>
<dbReference type="RefSeq" id="NP_001281264.1">
    <molecule id="O60241-2"/>
    <property type="nucleotide sequence ID" value="NM_001294335.2"/>
</dbReference>
<dbReference type="RefSeq" id="NP_001281265.1">
    <molecule id="O60241-4"/>
    <property type="nucleotide sequence ID" value="NM_001294336.2"/>
</dbReference>
<dbReference type="RefSeq" id="NP_001351786.1">
    <molecule id="O60241-1"/>
    <property type="nucleotide sequence ID" value="NM_001364857.2"/>
</dbReference>
<dbReference type="RefSeq" id="XP_011540150.1">
    <property type="nucleotide sequence ID" value="XM_011541848.2"/>
</dbReference>
<dbReference type="RefSeq" id="XP_011540151.1">
    <property type="nucleotide sequence ID" value="XM_011541849.2"/>
</dbReference>
<dbReference type="RefSeq" id="XP_016857388.1">
    <molecule id="O60241-1"/>
    <property type="nucleotide sequence ID" value="XM_017001899.2"/>
</dbReference>
<dbReference type="RefSeq" id="XP_016857389.1">
    <molecule id="O60241-2"/>
    <property type="nucleotide sequence ID" value="XM_017001900.2"/>
</dbReference>
<dbReference type="RefSeq" id="XP_016857394.1">
    <molecule id="O60241-4"/>
    <property type="nucleotide sequence ID" value="XM_017001905.2"/>
</dbReference>
<dbReference type="RefSeq" id="XP_024304441.1">
    <molecule id="O60241-3"/>
    <property type="nucleotide sequence ID" value="XM_024448673.2"/>
</dbReference>
<dbReference type="RefSeq" id="XP_047282129.1">
    <molecule id="O60241-1"/>
    <property type="nucleotide sequence ID" value="XM_047426173.1"/>
</dbReference>
<dbReference type="RefSeq" id="XP_054193838.1">
    <molecule id="O60241-1"/>
    <property type="nucleotide sequence ID" value="XM_054337863.1"/>
</dbReference>
<dbReference type="RefSeq" id="XP_054193839.1">
    <molecule id="O60241-1"/>
    <property type="nucleotide sequence ID" value="XM_054337864.1"/>
</dbReference>
<dbReference type="RefSeq" id="XP_054193840.1">
    <molecule id="O60241-2"/>
    <property type="nucleotide sequence ID" value="XM_054337865.1"/>
</dbReference>
<dbReference type="RefSeq" id="XP_054193841.1">
    <molecule id="O60241-3"/>
    <property type="nucleotide sequence ID" value="XM_054337866.1"/>
</dbReference>
<dbReference type="RefSeq" id="XP_054193846.1">
    <molecule id="O60241-4"/>
    <property type="nucleotide sequence ID" value="XM_054337871.1"/>
</dbReference>
<dbReference type="PDB" id="8OEK">
    <property type="method" value="X-ray"/>
    <property type="resolution" value="2.22 A"/>
    <property type="chains" value="A=528-921"/>
</dbReference>
<dbReference type="PDBsum" id="8OEK"/>
<dbReference type="SMR" id="O60241"/>
<dbReference type="BioGRID" id="107052">
    <property type="interactions" value="10"/>
</dbReference>
<dbReference type="FunCoup" id="O60241">
    <property type="interactions" value="610"/>
</dbReference>
<dbReference type="IntAct" id="O60241">
    <property type="interactions" value="10"/>
</dbReference>
<dbReference type="MINT" id="O60241"/>
<dbReference type="STRING" id="9606.ENSP00000362759"/>
<dbReference type="MEROPS" id="P02.029"/>
<dbReference type="TCDB" id="9.A.14.6.6">
    <property type="family name" value="the g-protein-coupled receptor (gpcr) family"/>
</dbReference>
<dbReference type="CarbonylDB" id="O60241"/>
<dbReference type="GlyCosmos" id="O60241">
    <property type="glycosylation" value="8 sites, No reported glycans"/>
</dbReference>
<dbReference type="GlyGen" id="O60241">
    <property type="glycosylation" value="10 sites, 2 N-linked glycans (2 sites)"/>
</dbReference>
<dbReference type="iPTMnet" id="O60241"/>
<dbReference type="PhosphoSitePlus" id="O60241"/>
<dbReference type="BioMuta" id="ADGRB2"/>
<dbReference type="jPOST" id="O60241"/>
<dbReference type="MassIVE" id="O60241"/>
<dbReference type="PaxDb" id="9606-ENSP00000362759"/>
<dbReference type="PeptideAtlas" id="O60241"/>
<dbReference type="ProteomicsDB" id="49271">
    <molecule id="O60241-1"/>
</dbReference>
<dbReference type="ProteomicsDB" id="49272">
    <molecule id="O60241-2"/>
</dbReference>
<dbReference type="ProteomicsDB" id="49273">
    <molecule id="O60241-3"/>
</dbReference>
<dbReference type="ProteomicsDB" id="49274">
    <molecule id="O60241-4"/>
</dbReference>
<dbReference type="Antibodypedia" id="16794">
    <property type="antibodies" value="291 antibodies from 33 providers"/>
</dbReference>
<dbReference type="DNASU" id="576"/>
<dbReference type="Ensembl" id="ENST00000373655.6">
    <molecule id="O60241-2"/>
    <property type="protein sequence ID" value="ENSP00000362759.2"/>
    <property type="gene ID" value="ENSG00000121753.13"/>
</dbReference>
<dbReference type="Ensembl" id="ENST00000373658.8">
    <molecule id="O60241-1"/>
    <property type="protein sequence ID" value="ENSP00000362762.3"/>
    <property type="gene ID" value="ENSG00000121753.13"/>
</dbReference>
<dbReference type="Ensembl" id="ENST00000527361.5">
    <molecule id="O60241-4"/>
    <property type="protein sequence ID" value="ENSP00000435397.1"/>
    <property type="gene ID" value="ENSG00000121753.13"/>
</dbReference>
<dbReference type="GeneID" id="576"/>
<dbReference type="KEGG" id="hsa:576"/>
<dbReference type="MANE-Select" id="ENST00000373658.8">
    <property type="protein sequence ID" value="ENSP00000362762.3"/>
    <property type="RefSeq nucleotide sequence ID" value="NM_001364857.2"/>
    <property type="RefSeq protein sequence ID" value="NP_001351786.1"/>
</dbReference>
<dbReference type="UCSC" id="uc001btn.4">
    <molecule id="O60241-1"/>
    <property type="organism name" value="human"/>
</dbReference>
<dbReference type="AGR" id="HGNC:944"/>
<dbReference type="CTD" id="576"/>
<dbReference type="DisGeNET" id="576"/>
<dbReference type="GeneCards" id="ADGRB2"/>
<dbReference type="HGNC" id="HGNC:944">
    <property type="gene designation" value="ADGRB2"/>
</dbReference>
<dbReference type="HPA" id="ENSG00000121753">
    <property type="expression patterns" value="Tissue enriched (brain)"/>
</dbReference>
<dbReference type="MIM" id="602683">
    <property type="type" value="gene"/>
</dbReference>
<dbReference type="neXtProt" id="NX_O60241"/>
<dbReference type="OpenTargets" id="ENSG00000121753"/>
<dbReference type="PharmGKB" id="PA25248"/>
<dbReference type="VEuPathDB" id="HostDB:ENSG00000121753"/>
<dbReference type="eggNOG" id="ENOG502QRKJ">
    <property type="taxonomic scope" value="Eukaryota"/>
</dbReference>
<dbReference type="GeneTree" id="ENSGT00940000160103"/>
<dbReference type="InParanoid" id="O60241"/>
<dbReference type="OMA" id="TDTCPVP"/>
<dbReference type="OrthoDB" id="5989160at2759"/>
<dbReference type="PAN-GO" id="O60241">
    <property type="GO annotations" value="4 GO annotations based on evolutionary models"/>
</dbReference>
<dbReference type="PhylomeDB" id="O60241"/>
<dbReference type="TreeFam" id="TF331634"/>
<dbReference type="PathwayCommons" id="O60241"/>
<dbReference type="SignaLink" id="O60241"/>
<dbReference type="BioGRID-ORCS" id="576">
    <property type="hits" value="24 hits in 772 CRISPR screens"/>
</dbReference>
<dbReference type="ChiTaRS" id="ADGRB2">
    <property type="organism name" value="human"/>
</dbReference>
<dbReference type="GeneWiki" id="Brain-specific_angiogenesis_inhibitor_2"/>
<dbReference type="GenomeRNAi" id="576"/>
<dbReference type="Pharos" id="O60241">
    <property type="development level" value="Tbio"/>
</dbReference>
<dbReference type="PRO" id="PR:O60241"/>
<dbReference type="Proteomes" id="UP000005640">
    <property type="component" value="Chromosome 1"/>
</dbReference>
<dbReference type="RNAct" id="O60241">
    <property type="molecule type" value="protein"/>
</dbReference>
<dbReference type="Bgee" id="ENSG00000121753">
    <property type="expression patterns" value="Expressed in right frontal lobe and 132 other cell types or tissues"/>
</dbReference>
<dbReference type="ExpressionAtlas" id="O60241">
    <property type="expression patterns" value="baseline and differential"/>
</dbReference>
<dbReference type="GO" id="GO:0005576">
    <property type="term" value="C:extracellular region"/>
    <property type="evidence" value="ECO:0007669"/>
    <property type="project" value="UniProtKB-SubCell"/>
</dbReference>
<dbReference type="GO" id="GO:0098978">
    <property type="term" value="C:glutamatergic synapse"/>
    <property type="evidence" value="ECO:0007669"/>
    <property type="project" value="Ensembl"/>
</dbReference>
<dbReference type="GO" id="GO:0016020">
    <property type="term" value="C:membrane"/>
    <property type="evidence" value="ECO:0000304"/>
    <property type="project" value="GDB"/>
</dbReference>
<dbReference type="GO" id="GO:0005886">
    <property type="term" value="C:plasma membrane"/>
    <property type="evidence" value="ECO:0000314"/>
    <property type="project" value="HPA"/>
</dbReference>
<dbReference type="GO" id="GO:0004930">
    <property type="term" value="F:G protein-coupled receptor activity"/>
    <property type="evidence" value="ECO:0000315"/>
    <property type="project" value="UniProtKB"/>
</dbReference>
<dbReference type="GO" id="GO:0007189">
    <property type="term" value="P:adenylate cyclase-activating G protein-coupled receptor signaling pathway"/>
    <property type="evidence" value="ECO:0000318"/>
    <property type="project" value="GO_Central"/>
</dbReference>
<dbReference type="GO" id="GO:0033173">
    <property type="term" value="P:calcineurin-NFAT signaling cascade"/>
    <property type="evidence" value="ECO:0000315"/>
    <property type="project" value="UniProtKB"/>
</dbReference>
<dbReference type="GO" id="GO:0007166">
    <property type="term" value="P:cell surface receptor signaling pathway"/>
    <property type="evidence" value="ECO:0007669"/>
    <property type="project" value="InterPro"/>
</dbReference>
<dbReference type="GO" id="GO:0007186">
    <property type="term" value="P:G protein-coupled receptor signaling pathway"/>
    <property type="evidence" value="ECO:0000314"/>
    <property type="project" value="UniProtKB"/>
</dbReference>
<dbReference type="GO" id="GO:0016525">
    <property type="term" value="P:negative regulation of angiogenesis"/>
    <property type="evidence" value="ECO:0007669"/>
    <property type="project" value="InterPro"/>
</dbReference>
<dbReference type="GO" id="GO:0007422">
    <property type="term" value="P:peripheral nervous system development"/>
    <property type="evidence" value="ECO:0000318"/>
    <property type="project" value="GO_Central"/>
</dbReference>
<dbReference type="GO" id="GO:0051965">
    <property type="term" value="P:positive regulation of synapse assembly"/>
    <property type="evidence" value="ECO:0007669"/>
    <property type="project" value="Ensembl"/>
</dbReference>
<dbReference type="CDD" id="cd15988">
    <property type="entry name" value="7tmB2_BAI2"/>
    <property type="match status" value="1"/>
</dbReference>
<dbReference type="FunFam" id="1.25.40.610:FF:000002">
    <property type="entry name" value="Adhesion G protein-coupled receptor B2"/>
    <property type="match status" value="1"/>
</dbReference>
<dbReference type="FunFam" id="2.20.100.10:FF:000003">
    <property type="entry name" value="Adhesion G protein-coupled receptor B2"/>
    <property type="match status" value="2"/>
</dbReference>
<dbReference type="FunFam" id="2.20.100.10:FF:000004">
    <property type="entry name" value="Adhesion G protein-coupled receptor B2"/>
    <property type="match status" value="1"/>
</dbReference>
<dbReference type="FunFam" id="2.20.100.10:FF:000012">
    <property type="entry name" value="Adhesion G protein-coupled receptor B2"/>
    <property type="match status" value="1"/>
</dbReference>
<dbReference type="FunFam" id="4.10.1240.10:FF:000002">
    <property type="entry name" value="Adhesion G protein-coupled receptor B2"/>
    <property type="match status" value="1"/>
</dbReference>
<dbReference type="Gene3D" id="1.25.40.610">
    <property type="match status" value="1"/>
</dbReference>
<dbReference type="Gene3D" id="2.60.220.50">
    <property type="match status" value="1"/>
</dbReference>
<dbReference type="Gene3D" id="4.10.1240.10">
    <property type="entry name" value="GPCR, family 2, extracellular hormone receptor domain"/>
    <property type="match status" value="1"/>
</dbReference>
<dbReference type="Gene3D" id="1.20.1070.10">
    <property type="entry name" value="Rhodopsin 7-helix transmembrane proteins"/>
    <property type="match status" value="1"/>
</dbReference>
<dbReference type="Gene3D" id="2.20.100.10">
    <property type="entry name" value="Thrombospondin type-1 (TSP1) repeat"/>
    <property type="match status" value="4"/>
</dbReference>
<dbReference type="InterPro" id="IPR043838">
    <property type="entry name" value="AGRB_N"/>
</dbReference>
<dbReference type="InterPro" id="IPR051867">
    <property type="entry name" value="Angio_Inhib/Adhesion_GPCR"/>
</dbReference>
<dbReference type="InterPro" id="IPR057244">
    <property type="entry name" value="GAIN_B"/>
</dbReference>
<dbReference type="InterPro" id="IPR032471">
    <property type="entry name" value="GAIN_dom_N"/>
</dbReference>
<dbReference type="InterPro" id="IPR046338">
    <property type="entry name" value="GAIN_dom_sf"/>
</dbReference>
<dbReference type="InterPro" id="IPR017981">
    <property type="entry name" value="GPCR_2-like_7TM"/>
</dbReference>
<dbReference type="InterPro" id="IPR008077">
    <property type="entry name" value="GPCR_2_brain_angio_inhib"/>
</dbReference>
<dbReference type="InterPro" id="IPR036445">
    <property type="entry name" value="GPCR_2_extracell_dom_sf"/>
</dbReference>
<dbReference type="InterPro" id="IPR001879">
    <property type="entry name" value="GPCR_2_extracellular_dom"/>
</dbReference>
<dbReference type="InterPro" id="IPR000832">
    <property type="entry name" value="GPCR_2_secretin-like"/>
</dbReference>
<dbReference type="InterPro" id="IPR000203">
    <property type="entry name" value="GPS"/>
</dbReference>
<dbReference type="InterPro" id="IPR000884">
    <property type="entry name" value="TSP1_rpt"/>
</dbReference>
<dbReference type="InterPro" id="IPR036383">
    <property type="entry name" value="TSP1_rpt_sf"/>
</dbReference>
<dbReference type="PANTHER" id="PTHR10239:SF32">
    <property type="entry name" value="ADHESION G PROTEIN-COUPLED RECEPTOR B2"/>
    <property type="match status" value="1"/>
</dbReference>
<dbReference type="PANTHER" id="PTHR10239">
    <property type="entry name" value="ISTHMIN-2"/>
    <property type="match status" value="1"/>
</dbReference>
<dbReference type="Pfam" id="PF00002">
    <property type="entry name" value="7tm_2"/>
    <property type="match status" value="1"/>
</dbReference>
<dbReference type="Pfam" id="PF19188">
    <property type="entry name" value="AGRB_N"/>
    <property type="match status" value="1"/>
</dbReference>
<dbReference type="Pfam" id="PF16489">
    <property type="entry name" value="GAIN"/>
    <property type="match status" value="1"/>
</dbReference>
<dbReference type="Pfam" id="PF01825">
    <property type="entry name" value="GPS"/>
    <property type="match status" value="1"/>
</dbReference>
<dbReference type="Pfam" id="PF00090">
    <property type="entry name" value="TSP_1"/>
    <property type="match status" value="4"/>
</dbReference>
<dbReference type="PRINTS" id="PR01694">
    <property type="entry name" value="BAIPRECURSOR"/>
</dbReference>
<dbReference type="PRINTS" id="PR00249">
    <property type="entry name" value="GPCRSECRETIN"/>
</dbReference>
<dbReference type="SMART" id="SM00303">
    <property type="entry name" value="GPS"/>
    <property type="match status" value="1"/>
</dbReference>
<dbReference type="SMART" id="SM00008">
    <property type="entry name" value="HormR"/>
    <property type="match status" value="1"/>
</dbReference>
<dbReference type="SMART" id="SM00209">
    <property type="entry name" value="TSP1"/>
    <property type="match status" value="4"/>
</dbReference>
<dbReference type="SUPFAM" id="SSF81321">
    <property type="entry name" value="Family A G protein-coupled receptor-like"/>
    <property type="match status" value="1"/>
</dbReference>
<dbReference type="SUPFAM" id="SSF82895">
    <property type="entry name" value="TSP-1 type 1 repeat"/>
    <property type="match status" value="4"/>
</dbReference>
<dbReference type="PROSITE" id="PS50227">
    <property type="entry name" value="G_PROTEIN_RECEP_F2_3"/>
    <property type="match status" value="1"/>
</dbReference>
<dbReference type="PROSITE" id="PS50261">
    <property type="entry name" value="G_PROTEIN_RECEP_F2_4"/>
    <property type="match status" value="1"/>
</dbReference>
<dbReference type="PROSITE" id="PS50221">
    <property type="entry name" value="GAIN_B"/>
    <property type="match status" value="1"/>
</dbReference>
<dbReference type="PROSITE" id="PS50092">
    <property type="entry name" value="TSP1"/>
    <property type="match status" value="4"/>
</dbReference>
<name>AGRB2_HUMAN</name>
<accession>O60241</accession>
<accession>B9EGK9</accession>
<accession>Q5T6K0</accession>
<accession>Q8NGW8</accession>
<accession>Q96GZ9</accession>
<comment type="function">
    <text evidence="1 6 9">Orphan G-protein coupled receptor involved in cell adhesion and probably in cell-cell interactions. Activates NFAT-signaling pathway, a transcription factor, via the G-protein GNAZ (PubMed:20367554, PubMed:28891236). Involved in angiogenesis inhibition (By similarity).</text>
</comment>
<comment type="activity regulation">
    <text evidence="6 9">Receptor activity is regulated by proteolytic processing. The long N-terminal has a an inhibitory effect on the constitutive signaling activity. Removal of the N-terminal region induces an increase of the receptor activity.</text>
</comment>
<comment type="subunit">
    <text evidence="1 7 9">Heterodimer of 2 chains generated by proteolytic processing; the large extracellular N-terminal fragment and the membrane-bound C-terminal fragment predominantly remain associated and non-covalently linked. Interacts with GABPB2 (By similarity). Interacts (via carboxy-terminus) with TAX1BP3 (PubMed:21787750). Interacts with GNAZ (PubMed:28891236). Interacts with SH3GL2 (PubMed:28891236).</text>
</comment>
<comment type="subcellular location">
    <subcellularLocation>
        <location evidence="9">Cell membrane</location>
        <topology evidence="2">Multi-pass membrane protein</topology>
    </subcellularLocation>
    <subcellularLocation>
        <location evidence="8">Secreted</location>
    </subcellularLocation>
</comment>
<comment type="alternative products">
    <event type="alternative splicing"/>
    <isoform>
        <id>O60241-1</id>
        <name>1</name>
        <sequence type="displayed"/>
    </isoform>
    <isoform>
        <id>O60241-2</id>
        <name>2</name>
        <sequence type="described" ref="VSP_037047"/>
    </isoform>
    <isoform>
        <id>O60241-3</id>
        <name>3</name>
        <sequence type="described" ref="VSP_037045"/>
    </isoform>
    <isoform>
        <id>O60241-4</id>
        <name>4</name>
        <sequence type="described" ref="VSP_037046 VSP_037047"/>
    </isoform>
</comment>
<comment type="tissue specificity">
    <text evidence="8">Detected in cerebrospinal fluid (at protein level) (PubMed:25326458). Strongly expressed in brain. Also detected in heart, thymus, skeletal muscle, and different cell lines.</text>
</comment>
<comment type="PTM">
    <text evidence="6">Glycosylated.</text>
</comment>
<comment type="PTM">
    <text evidence="3 6">Autoproteolytically processed at the GPS region of the GAIN-B domain; this cleavage modulates receptor activity (By similarity). Additionally, furin is involved in the cleavage at another site, in the middle of the extracellular domain, generating a soluble fragment.</text>
</comment>
<comment type="similarity">
    <text evidence="13">Belongs to the G-protein coupled receptor 2 family. Adhesion G-protein coupled receptor (ADGR) subfamily.</text>
</comment>
<comment type="sequence caution" evidence="13">
    <conflict type="erroneous initiation">
        <sequence resource="EMBL-CDS" id="BAA25362"/>
    </conflict>
</comment>
<reference key="1">
    <citation type="journal article" date="1997" name="Cytogenet. Cell Genet.">
        <title>Cloning and characterization of BAI2 and BAI3, novel genes homologous to brain-specific angiogenesis inhibitor 1 (BAI1).</title>
        <authorList>
            <person name="Shiratsuchi T."/>
            <person name="Nishimori H."/>
            <person name="Ichise H."/>
            <person name="Nakamura Y."/>
            <person name="Tokino T."/>
        </authorList>
    </citation>
    <scope>NUCLEOTIDE SEQUENCE [MRNA] (ISOFORM 2)</scope>
    <source>
        <tissue>Fetal brain</tissue>
    </source>
</reference>
<reference key="2">
    <citation type="submission" date="2001-07" db="EMBL/GenBank/DDBJ databases">
        <title>Genome-wide discovery and analysis of human seven transmembrane helix receptor genes.</title>
        <authorList>
            <person name="Suwa M."/>
            <person name="Sato T."/>
            <person name="Okouchi I."/>
            <person name="Arita M."/>
            <person name="Futami K."/>
            <person name="Matsumoto S."/>
            <person name="Tsutsumi S."/>
            <person name="Aburatani H."/>
            <person name="Asai K."/>
            <person name="Akiyama Y."/>
        </authorList>
    </citation>
    <scope>NUCLEOTIDE SEQUENCE [GENOMIC DNA]</scope>
</reference>
<reference key="3">
    <citation type="journal article" date="2006" name="Nature">
        <title>The DNA sequence and biological annotation of human chromosome 1.</title>
        <authorList>
            <person name="Gregory S.G."/>
            <person name="Barlow K.F."/>
            <person name="McLay K.E."/>
            <person name="Kaul R."/>
            <person name="Swarbreck D."/>
            <person name="Dunham A."/>
            <person name="Scott C.E."/>
            <person name="Howe K.L."/>
            <person name="Woodfine K."/>
            <person name="Spencer C.C.A."/>
            <person name="Jones M.C."/>
            <person name="Gillson C."/>
            <person name="Searle S."/>
            <person name="Zhou Y."/>
            <person name="Kokocinski F."/>
            <person name="McDonald L."/>
            <person name="Evans R."/>
            <person name="Phillips K."/>
            <person name="Atkinson A."/>
            <person name="Cooper R."/>
            <person name="Jones C."/>
            <person name="Hall R.E."/>
            <person name="Andrews T.D."/>
            <person name="Lloyd C."/>
            <person name="Ainscough R."/>
            <person name="Almeida J.P."/>
            <person name="Ambrose K.D."/>
            <person name="Anderson F."/>
            <person name="Andrew R.W."/>
            <person name="Ashwell R.I.S."/>
            <person name="Aubin K."/>
            <person name="Babbage A.K."/>
            <person name="Bagguley C.L."/>
            <person name="Bailey J."/>
            <person name="Beasley H."/>
            <person name="Bethel G."/>
            <person name="Bird C.P."/>
            <person name="Bray-Allen S."/>
            <person name="Brown J.Y."/>
            <person name="Brown A.J."/>
            <person name="Buckley D."/>
            <person name="Burton J."/>
            <person name="Bye J."/>
            <person name="Carder C."/>
            <person name="Chapman J.C."/>
            <person name="Clark S.Y."/>
            <person name="Clarke G."/>
            <person name="Clee C."/>
            <person name="Cobley V."/>
            <person name="Collier R.E."/>
            <person name="Corby N."/>
            <person name="Coville G.J."/>
            <person name="Davies J."/>
            <person name="Deadman R."/>
            <person name="Dunn M."/>
            <person name="Earthrowl M."/>
            <person name="Ellington A.G."/>
            <person name="Errington H."/>
            <person name="Frankish A."/>
            <person name="Frankland J."/>
            <person name="French L."/>
            <person name="Garner P."/>
            <person name="Garnett J."/>
            <person name="Gay L."/>
            <person name="Ghori M.R.J."/>
            <person name="Gibson R."/>
            <person name="Gilby L.M."/>
            <person name="Gillett W."/>
            <person name="Glithero R.J."/>
            <person name="Grafham D.V."/>
            <person name="Griffiths C."/>
            <person name="Griffiths-Jones S."/>
            <person name="Grocock R."/>
            <person name="Hammond S."/>
            <person name="Harrison E.S.I."/>
            <person name="Hart E."/>
            <person name="Haugen E."/>
            <person name="Heath P.D."/>
            <person name="Holmes S."/>
            <person name="Holt K."/>
            <person name="Howden P.J."/>
            <person name="Hunt A.R."/>
            <person name="Hunt S.E."/>
            <person name="Hunter G."/>
            <person name="Isherwood J."/>
            <person name="James R."/>
            <person name="Johnson C."/>
            <person name="Johnson D."/>
            <person name="Joy A."/>
            <person name="Kay M."/>
            <person name="Kershaw J.K."/>
            <person name="Kibukawa M."/>
            <person name="Kimberley A.M."/>
            <person name="King A."/>
            <person name="Knights A.J."/>
            <person name="Lad H."/>
            <person name="Laird G."/>
            <person name="Lawlor S."/>
            <person name="Leongamornlert D.A."/>
            <person name="Lloyd D.M."/>
            <person name="Loveland J."/>
            <person name="Lovell J."/>
            <person name="Lush M.J."/>
            <person name="Lyne R."/>
            <person name="Martin S."/>
            <person name="Mashreghi-Mohammadi M."/>
            <person name="Matthews L."/>
            <person name="Matthews N.S.W."/>
            <person name="McLaren S."/>
            <person name="Milne S."/>
            <person name="Mistry S."/>
            <person name="Moore M.J.F."/>
            <person name="Nickerson T."/>
            <person name="O'Dell C.N."/>
            <person name="Oliver K."/>
            <person name="Palmeiri A."/>
            <person name="Palmer S.A."/>
            <person name="Parker A."/>
            <person name="Patel D."/>
            <person name="Pearce A.V."/>
            <person name="Peck A.I."/>
            <person name="Pelan S."/>
            <person name="Phelps K."/>
            <person name="Phillimore B.J."/>
            <person name="Plumb R."/>
            <person name="Rajan J."/>
            <person name="Raymond C."/>
            <person name="Rouse G."/>
            <person name="Saenphimmachak C."/>
            <person name="Sehra H.K."/>
            <person name="Sheridan E."/>
            <person name="Shownkeen R."/>
            <person name="Sims S."/>
            <person name="Skuce C.D."/>
            <person name="Smith M."/>
            <person name="Steward C."/>
            <person name="Subramanian S."/>
            <person name="Sycamore N."/>
            <person name="Tracey A."/>
            <person name="Tromans A."/>
            <person name="Van Helmond Z."/>
            <person name="Wall M."/>
            <person name="Wallis J.M."/>
            <person name="White S."/>
            <person name="Whitehead S.L."/>
            <person name="Wilkinson J.E."/>
            <person name="Willey D.L."/>
            <person name="Williams H."/>
            <person name="Wilming L."/>
            <person name="Wray P.W."/>
            <person name="Wu Z."/>
            <person name="Coulson A."/>
            <person name="Vaudin M."/>
            <person name="Sulston J.E."/>
            <person name="Durbin R.M."/>
            <person name="Hubbard T."/>
            <person name="Wooster R."/>
            <person name="Dunham I."/>
            <person name="Carter N.P."/>
            <person name="McVean G."/>
            <person name="Ross M.T."/>
            <person name="Harrow J."/>
            <person name="Olson M.V."/>
            <person name="Beck S."/>
            <person name="Rogers J."/>
            <person name="Bentley D.R."/>
        </authorList>
    </citation>
    <scope>NUCLEOTIDE SEQUENCE [LARGE SCALE GENOMIC DNA]</scope>
</reference>
<reference key="4">
    <citation type="journal article" date="2004" name="Genome Res.">
        <title>The status, quality, and expansion of the NIH full-length cDNA project: the Mammalian Gene Collection (MGC).</title>
        <authorList>
            <consortium name="The MGC Project Team"/>
        </authorList>
    </citation>
    <scope>NUCLEOTIDE SEQUENCE [LARGE SCALE MRNA] (ISOFORM 4)</scope>
    <scope>NUCLEOTIDE SEQUENCE [LARGE SCALE MRNA] OF 1293-1585 (ISOFORM 1)</scope>
    <source>
        <tissue>Brain</tissue>
    </source>
</reference>
<reference key="5">
    <citation type="journal article" date="2010" name="J. Recept. Signal Transduct.">
        <title>Brain-specific angiogenesis inhibitor 2 (BAI2) may be activated by proteolytic processing.</title>
        <authorList>
            <person name="Okajima D."/>
            <person name="Kudo G."/>
            <person name="Yokota H."/>
        </authorList>
    </citation>
    <scope>CLEAVAGE BY FURIN</scope>
    <scope>PROTEOLYTIC PROCESSING</scope>
    <scope>MUTAGENESIS OF TRP-889; CYS-908 AND SER-912</scope>
    <scope>SUBUNIT</scope>
    <scope>PROTEIN SEQUENCE OF 296-306</scope>
    <scope>GLYCOSYLATION</scope>
    <scope>FUNCTION</scope>
    <scope>ACTIVITY REGULATION</scope>
</reference>
<reference key="6">
    <citation type="journal article" date="2011" name="Biochem. Biophys. Res. Commun.">
        <title>Identification of brain-specific angiogenesis inhibitor 2 as an interaction partner of glutaminase interacting protein.</title>
        <authorList>
            <person name="Zencir S."/>
            <person name="Ovee M."/>
            <person name="Dobson M.J."/>
            <person name="Banerjee M."/>
            <person name="Topcu Z."/>
            <person name="Mohanty S."/>
        </authorList>
    </citation>
    <scope>INTERACTION WITH TAX1BP3</scope>
</reference>
<reference key="7">
    <citation type="journal article" date="2015" name="Mol. Cell. Proteomics">
        <title>Identification of chondroitin sulfate linkage region glycopeptides reveals prohormones as a novel class of proteoglycans.</title>
        <authorList>
            <person name="Noborn F."/>
            <person name="Gomez Toledo A."/>
            <person name="Sihlbom C."/>
            <person name="Lengqvist J."/>
            <person name="Fries E."/>
            <person name="Kjellen L."/>
            <person name="Nilsson J."/>
            <person name="Larson G."/>
        </authorList>
    </citation>
    <scope>SUBCELLULAR LOCATION</scope>
    <scope>TISSUE SPECIFICITY</scope>
    <scope>GLYCOSYLATION AT SER-266</scope>
</reference>
<reference key="8">
    <citation type="journal article" date="2015" name="Pharmacol. Rev.">
        <title>International union of basic and clinical pharmacology. XCIV. Adhesion G protein-coupled receptors.</title>
        <authorList>
            <person name="Hamann J."/>
            <person name="Aust G."/>
            <person name="Arac D."/>
            <person name="Engel F.B."/>
            <person name="Formstone C."/>
            <person name="Fredriksson R."/>
            <person name="Hall R.A."/>
            <person name="Harty B.L."/>
            <person name="Kirchhoff C."/>
            <person name="Knapp B."/>
            <person name="Krishnan A."/>
            <person name="Liebscher I."/>
            <person name="Lin H.H."/>
            <person name="Martinelli D.C."/>
            <person name="Monk K.R."/>
            <person name="Peeters M.C."/>
            <person name="Piao X."/>
            <person name="Promel S."/>
            <person name="Schoneberg T."/>
            <person name="Schwartz T.W."/>
            <person name="Singer K."/>
            <person name="Stacey M."/>
            <person name="Ushkaryov Y.A."/>
            <person name="Vallon M."/>
            <person name="Wolfrum U."/>
            <person name="Wright M.W."/>
            <person name="Xu L."/>
            <person name="Langenhan T."/>
            <person name="Schioth H.B."/>
        </authorList>
    </citation>
    <scope>NOMENCLATURE</scope>
</reference>
<reference key="9">
    <citation type="journal article" date="2017" name="Hum. Mutat.">
        <title>A disease-associated mutation in the adhesion GPCR BAI2 (ADGRB2) increases receptor signaling activity.</title>
        <authorList>
            <person name="Purcell R.H."/>
            <person name="Toro C."/>
            <person name="Gahl W.A."/>
            <person name="Hall R.A."/>
        </authorList>
    </citation>
    <scope>SUBCELLULAR LOCATION</scope>
    <scope>VARIANT TRP-1465</scope>
    <scope>CHARACTERIZATION OF VARIANT TRP-1465</scope>
    <scope>INTERACTION WITH SH3GL2 AND GNAZ</scope>
    <scope>FUNCTION</scope>
</reference>
<protein>
    <recommendedName>
        <fullName evidence="11">Adhesion G protein-coupled receptor B2</fullName>
    </recommendedName>
    <alternativeName>
        <fullName>Brain-specific angiogenesis inhibitor 2</fullName>
    </alternativeName>
</protein>
<gene>
    <name evidence="14" type="primary">ADGRB2</name>
    <name type="synonym">BAI2</name>
</gene>
<sequence>MENTGWMGKGHRMTPACPLLLSVILSLRLATAFDPAPSACSALASGVLYGAFSLQDLFPTIASGCSWTLENPDPTKYSLYLRFNRQEQVCAHFAPRLLPLDHYLVNFTCLRPSPEEAVAQAESEVGRPEEEEAEAAAGLELCSGSGPFTFLHFDKNFVQLCLSAEPSEAPRLLAPAALAFRFVEVLLINNNNSSQFTCGVLCRWSEECGRAAGRACGFAQPGCSCPGEAGAGSTTTTSPGPPAAHTLSNALVPGGPAPPAEADLHSGSSNDLFTTEMRYGEEPEEEPKVKTQWPRSADEPGLYMAQTGDPAAEEWSPWSVCSLTCGQGLQVRTRSCVSSPYGTLCSGPLRETRPCNNSATCPVHGVWEEWGSWSLCSRSCGRGSRSRMRTCVPPQHGGKACEGPELQTKLCSMAACPVEGQWLEWGPWGPCSTSCANGTQQRSRKCSVAGPAWATCTGALTDTRECSNLECPATDSKWGPWNAWSLCSKTCDTGWQRRFRMCQATGTQGYPCEGTGEEVKPCSEKRCPAFHEMCRDEYVMLMTWKKAAAGEIIYNKCPPNASGSASRRCLLSAQGVAYWGLPSFARCISHEYRYLYLSLREHLAKGQRMLAGEGMSQVVRSLQELLARRTYYSGDLLFSVDILRNVTDTFKRATYVPSADDVQRFFQVVSFMVDAENKEKWDDAQQVSPGSVHLLRVVEDFIHLVGDALKAFQSSLIVTDNLVISIQREPVSAVSSDITFPMRGRRGMKDWVRHSEDRLFLPKEVLSLSSPGKPATSGAAGSPGRGRGPGTVPPGPGHSHQRLLPADPDESSYFVIGAVLYRTLGLILPPPRPPLAVTSRVMTVTVRPPTQPPAEPLITVELSYIINGTTDPHCASWDYSRADASSGDWDTENCQTLETQAAHTRCQCQHLSTFAVLAQPPKDLTLELAGSPSVPLVIGCAVSCMALLTLLAIYAAFWRFIKSERSIILLNFCLSILASNILILVGQSRVLSKGVCTMTAAFLHFFFLSSFCWVLTEAWQSYLAVIGRMRTRLVRKRFLCLGWGLPALVVAVSVGFTRTKGYGTSSYCWLSLEGGLLYAFVGPAAVIVLVNMLIGIIVFNKLMARDGISDKSKKQRAGSERCPWASLLLPCSACGAVPSPLLSSASARNAMASLWSSCVVLPLLALTWMSAVLAMTDRRSVLFQALFAVFNSAQGFVITAVHCFLRREVQDVVKCQMGVCRADESEDSPDSCKNGQLQILSDFEKDVDLACQTVLFKEVNTCNPSTITGTLSRLSLDEDEEPKSCLVGPEGSLSFSPLPGNILVPMAASPGLGEPPPPQEANPVYMCGEGGLRQLDLTWLRPTEPGSEGDYMVLPRRTLSLQPGGGGGGGEDAPRARPEGTPRRAAKTVAHTEGYPSFLSVDHSGLGLGPAYGSLQNPYGMTFQPPPPTPSARQVPEPGERSRTMPRTVPGSTMKMGSLERKKLRYSDLDFEKVMHTRKRHSELYHELNQKFHTFDRYRSQSTAKREKRWSVSSGGAAERSVCTDKPSPGERPSLSQHRRHQSWSTFKSMTLGSLPPKPRERLTLHRAAAWEPTEPPDGDFQTEV</sequence>
<proteinExistence type="evidence at protein level"/>
<keyword id="KW-0002">3D-structure</keyword>
<keyword id="KW-0025">Alternative splicing</keyword>
<keyword id="KW-1003">Cell membrane</keyword>
<keyword id="KW-0903">Direct protein sequencing</keyword>
<keyword id="KW-1015">Disulfide bond</keyword>
<keyword id="KW-0297">G-protein coupled receptor</keyword>
<keyword id="KW-0325">Glycoprotein</keyword>
<keyword id="KW-0472">Membrane</keyword>
<keyword id="KW-0597">Phosphoprotein</keyword>
<keyword id="KW-0654">Proteoglycan</keyword>
<keyword id="KW-1267">Proteomics identification</keyword>
<keyword id="KW-0675">Receptor</keyword>
<keyword id="KW-1185">Reference proteome</keyword>
<keyword id="KW-0677">Repeat</keyword>
<keyword id="KW-0964">Secreted</keyword>
<keyword id="KW-0732">Signal</keyword>
<keyword id="KW-0807">Transducer</keyword>
<keyword id="KW-0812">Transmembrane</keyword>
<keyword id="KW-1133">Transmembrane helix</keyword>
<evidence type="ECO:0000250" key="1">
    <source>
        <dbReference type="UniProtKB" id="Q8CGM1"/>
    </source>
</evidence>
<evidence type="ECO:0000255" key="2"/>
<evidence type="ECO:0000255" key="3">
    <source>
        <dbReference type="PROSITE-ProRule" id="PRU00098"/>
    </source>
</evidence>
<evidence type="ECO:0000255" key="4">
    <source>
        <dbReference type="PROSITE-ProRule" id="PRU00210"/>
    </source>
</evidence>
<evidence type="ECO:0000256" key="5">
    <source>
        <dbReference type="SAM" id="MobiDB-lite"/>
    </source>
</evidence>
<evidence type="ECO:0000269" key="6">
    <source>
    </source>
</evidence>
<evidence type="ECO:0000269" key="7">
    <source>
    </source>
</evidence>
<evidence type="ECO:0000269" key="8">
    <source>
    </source>
</evidence>
<evidence type="ECO:0000269" key="9">
    <source>
    </source>
</evidence>
<evidence type="ECO:0000303" key="10">
    <source>
    </source>
</evidence>
<evidence type="ECO:0000303" key="11">
    <source>
    </source>
</evidence>
<evidence type="ECO:0000303" key="12">
    <source>
    </source>
</evidence>
<evidence type="ECO:0000305" key="13"/>
<evidence type="ECO:0000312" key="14">
    <source>
        <dbReference type="HGNC" id="HGNC:944"/>
    </source>
</evidence>
<evidence type="ECO:0007829" key="15">
    <source>
        <dbReference type="PDB" id="8OEK"/>
    </source>
</evidence>
<organism>
    <name type="scientific">Homo sapiens</name>
    <name type="common">Human</name>
    <dbReference type="NCBI Taxonomy" id="9606"/>
    <lineage>
        <taxon>Eukaryota</taxon>
        <taxon>Metazoa</taxon>
        <taxon>Chordata</taxon>
        <taxon>Craniata</taxon>
        <taxon>Vertebrata</taxon>
        <taxon>Euteleostomi</taxon>
        <taxon>Mammalia</taxon>
        <taxon>Eutheria</taxon>
        <taxon>Euarchontoglires</taxon>
        <taxon>Primates</taxon>
        <taxon>Haplorrhini</taxon>
        <taxon>Catarrhini</taxon>
        <taxon>Hominidae</taxon>
        <taxon>Homo</taxon>
    </lineage>
</organism>